<protein>
    <recommendedName>
        <fullName evidence="1">DNA-directed RNA polymerase subunit beta'</fullName>
        <shortName evidence="1">RNAP subunit beta'</shortName>
        <ecNumber evidence="1">2.7.7.6</ecNumber>
    </recommendedName>
    <alternativeName>
        <fullName evidence="1">RNA polymerase subunit beta'</fullName>
    </alternativeName>
    <alternativeName>
        <fullName evidence="1">Transcriptase subunit beta'</fullName>
    </alternativeName>
</protein>
<dbReference type="EC" id="2.7.7.6" evidence="1"/>
<dbReference type="EMBL" id="BX908798">
    <property type="protein sequence ID" value="CAF23329.1"/>
    <property type="molecule type" value="Genomic_DNA"/>
</dbReference>
<dbReference type="RefSeq" id="WP_011175155.1">
    <property type="nucleotide sequence ID" value="NC_005861.2"/>
</dbReference>
<dbReference type="SMR" id="Q6MDM0"/>
<dbReference type="STRING" id="264201.pc0605"/>
<dbReference type="KEGG" id="pcu:PC_RS02900"/>
<dbReference type="eggNOG" id="COG0086">
    <property type="taxonomic scope" value="Bacteria"/>
</dbReference>
<dbReference type="HOGENOM" id="CLU_000524_3_1_0"/>
<dbReference type="OrthoDB" id="9815296at2"/>
<dbReference type="Proteomes" id="UP000000529">
    <property type="component" value="Chromosome"/>
</dbReference>
<dbReference type="GO" id="GO:0000428">
    <property type="term" value="C:DNA-directed RNA polymerase complex"/>
    <property type="evidence" value="ECO:0007669"/>
    <property type="project" value="UniProtKB-KW"/>
</dbReference>
<dbReference type="GO" id="GO:0003677">
    <property type="term" value="F:DNA binding"/>
    <property type="evidence" value="ECO:0007669"/>
    <property type="project" value="UniProtKB-UniRule"/>
</dbReference>
<dbReference type="GO" id="GO:0003899">
    <property type="term" value="F:DNA-directed RNA polymerase activity"/>
    <property type="evidence" value="ECO:0007669"/>
    <property type="project" value="UniProtKB-UniRule"/>
</dbReference>
<dbReference type="GO" id="GO:0000287">
    <property type="term" value="F:magnesium ion binding"/>
    <property type="evidence" value="ECO:0007669"/>
    <property type="project" value="UniProtKB-UniRule"/>
</dbReference>
<dbReference type="GO" id="GO:0008270">
    <property type="term" value="F:zinc ion binding"/>
    <property type="evidence" value="ECO:0007669"/>
    <property type="project" value="UniProtKB-UniRule"/>
</dbReference>
<dbReference type="GO" id="GO:0006351">
    <property type="term" value="P:DNA-templated transcription"/>
    <property type="evidence" value="ECO:0007669"/>
    <property type="project" value="UniProtKB-UniRule"/>
</dbReference>
<dbReference type="CDD" id="cd02655">
    <property type="entry name" value="RNAP_beta'_C"/>
    <property type="match status" value="1"/>
</dbReference>
<dbReference type="CDD" id="cd01609">
    <property type="entry name" value="RNAP_beta'_N"/>
    <property type="match status" value="1"/>
</dbReference>
<dbReference type="Gene3D" id="1.10.132.30">
    <property type="match status" value="1"/>
</dbReference>
<dbReference type="Gene3D" id="1.10.150.390">
    <property type="match status" value="1"/>
</dbReference>
<dbReference type="Gene3D" id="1.10.1790.20">
    <property type="match status" value="1"/>
</dbReference>
<dbReference type="Gene3D" id="1.10.40.90">
    <property type="match status" value="1"/>
</dbReference>
<dbReference type="Gene3D" id="2.40.40.20">
    <property type="match status" value="1"/>
</dbReference>
<dbReference type="Gene3D" id="2.40.50.100">
    <property type="match status" value="3"/>
</dbReference>
<dbReference type="Gene3D" id="4.10.860.120">
    <property type="entry name" value="RNA polymerase II, clamp domain"/>
    <property type="match status" value="1"/>
</dbReference>
<dbReference type="Gene3D" id="1.10.274.100">
    <property type="entry name" value="RNA polymerase Rpb1, domain 3"/>
    <property type="match status" value="1"/>
</dbReference>
<dbReference type="HAMAP" id="MF_01322">
    <property type="entry name" value="RNApol_bact_RpoC"/>
    <property type="match status" value="1"/>
</dbReference>
<dbReference type="InterPro" id="IPR045867">
    <property type="entry name" value="DNA-dir_RpoC_beta_prime"/>
</dbReference>
<dbReference type="InterPro" id="IPR012754">
    <property type="entry name" value="DNA-dir_RpoC_beta_prime_bact"/>
</dbReference>
<dbReference type="InterPro" id="IPR000722">
    <property type="entry name" value="RNA_pol_asu"/>
</dbReference>
<dbReference type="InterPro" id="IPR006592">
    <property type="entry name" value="RNA_pol_N"/>
</dbReference>
<dbReference type="InterPro" id="IPR007080">
    <property type="entry name" value="RNA_pol_Rpb1_1"/>
</dbReference>
<dbReference type="InterPro" id="IPR007066">
    <property type="entry name" value="RNA_pol_Rpb1_3"/>
</dbReference>
<dbReference type="InterPro" id="IPR042102">
    <property type="entry name" value="RNA_pol_Rpb1_3_sf"/>
</dbReference>
<dbReference type="InterPro" id="IPR007083">
    <property type="entry name" value="RNA_pol_Rpb1_4"/>
</dbReference>
<dbReference type="InterPro" id="IPR007081">
    <property type="entry name" value="RNA_pol_Rpb1_5"/>
</dbReference>
<dbReference type="InterPro" id="IPR044893">
    <property type="entry name" value="RNA_pol_Rpb1_clamp_domain"/>
</dbReference>
<dbReference type="InterPro" id="IPR038120">
    <property type="entry name" value="Rpb1_funnel_sf"/>
</dbReference>
<dbReference type="NCBIfam" id="TIGR02386">
    <property type="entry name" value="rpoC_TIGR"/>
    <property type="match status" value="1"/>
</dbReference>
<dbReference type="PANTHER" id="PTHR19376">
    <property type="entry name" value="DNA-DIRECTED RNA POLYMERASE"/>
    <property type="match status" value="1"/>
</dbReference>
<dbReference type="PANTHER" id="PTHR19376:SF54">
    <property type="entry name" value="DNA-DIRECTED RNA POLYMERASE SUBUNIT BETA"/>
    <property type="match status" value="1"/>
</dbReference>
<dbReference type="Pfam" id="PF04997">
    <property type="entry name" value="RNA_pol_Rpb1_1"/>
    <property type="match status" value="1"/>
</dbReference>
<dbReference type="Pfam" id="PF00623">
    <property type="entry name" value="RNA_pol_Rpb1_2"/>
    <property type="match status" value="1"/>
</dbReference>
<dbReference type="Pfam" id="PF04983">
    <property type="entry name" value="RNA_pol_Rpb1_3"/>
    <property type="match status" value="1"/>
</dbReference>
<dbReference type="Pfam" id="PF05000">
    <property type="entry name" value="RNA_pol_Rpb1_4"/>
    <property type="match status" value="1"/>
</dbReference>
<dbReference type="Pfam" id="PF04998">
    <property type="entry name" value="RNA_pol_Rpb1_5"/>
    <property type="match status" value="1"/>
</dbReference>
<dbReference type="SMART" id="SM00663">
    <property type="entry name" value="RPOLA_N"/>
    <property type="match status" value="1"/>
</dbReference>
<dbReference type="SUPFAM" id="SSF64484">
    <property type="entry name" value="beta and beta-prime subunits of DNA dependent RNA-polymerase"/>
    <property type="match status" value="1"/>
</dbReference>
<sequence>MSERNQQDGQFDKLTIKIASDDVIRNEWSRGEIKKPETINYRTFKPEKGGLFCEKIFGPTRDWECACGKYKKIKHKGIVCDRCGVEVTLSKVRRERMAHIDLAVPVVHIWFFKTMPSRIGNVLGMTSADLERVIYYEEYVVINPGQTDLERKQLLNDTEYREAQEKWGRDSFVAKMGGEAIRDLLASEDLQTQLVELKDKLRKTKSQQARMKLAKRLKIIESFVSSDNKPEWMIMSCVPVIPPDLRPLVPLDGGRFATSDLNDLYRRVINRNNRLKAILKLKTPDVIVRNEKRMLQEAVDALFDNGRHGHPVMGAGNRPLKSLSEMLKGKQGRFRQNLLGKRVDYSGRSVIIVGPELKFNQCGLPKLMALELFEPFIVKRLKDQGYVYTIRSAKKMIQRHAPEVWDVLEDIIKGHPVLLNRAPTLHRLGIQAFEPVLIEGKAIRIHPLVCSAFNADFDGDQMAVYVPLSIEAQLEAKLLMMAPDNIFLPSSGKPVAVPSQDMTLGLYYLMLDPLYIRENHELKTRVFRDSEEVLLALQASGSYNWYEEGSKSPNGENRSDYLRGIRIHEKIKLRTENGIIETTPGRVVFNTIVPKELGFQNYSLPKKKMGELVMQCYKKAGLEATVRFLDNLKSIGFAEATKSALSMGVCDVKIPTIKQKILHDAHERVAVVRKQYEDGIITEGERYSKTISIWTEVSDVLSEELFKLISEVKDSTMNPLYLMMDSGARGNKSQIRQLGALRGLMAKPSGDIIESPITSNFREGLSVIEFSISSHGARKGLADTALKTADSGYLTRRLVDVAQDVIITEDDCGTLNGIDVSAIKQGQEELLPLKDRIFGRTVCEDIYQPGDSTKLLAKSGDTLTVLQAEAIDDSGIESIRIRSVLTCETRRGVCAKCYGINLANSRSISMGEAVGIIAAQSIGEPGTQLTMRTFHLGGIASAGLTPEIVADDNGILVYTDLRTVKTDEGNWVALNKNGRLNIVKDEGRTLDEYKKLLSTKSIEPLQAFNVELGTKILLEEGTKVKPGTRVAEWEQHNIPIICDRPGYVRYEDLVEGLSTERDVNKQTGQAELIVKQHRGELHPQVAIYADQACEDLVGTYPLPAGAIISVEEGEFATAGKMLARLPRSAIKTKDITGGLPRVAELFEARKPKDSAEIAKIDGVVDFRGVQKNKRIVVVRDEMTGMEEEHLISHTKHLIIQRGDHVVKGQQLTDGLVIPHEILDICGVRELQKYLVNQVQEVYRLQGVDINDKHIEIIVRQMLKKVRVIDPGDTSLLYGEEVDKKEFEVENQKVSQEGGKAAQATPVLLGITKASLSTESFISAASFQDTTRVLTEAACAGKTDYLVGFKENVIMGHIIPGGTGFDRHKRVKMFVDSEQEQGLEFNFAD</sequence>
<organism>
    <name type="scientific">Protochlamydia amoebophila (strain UWE25)</name>
    <dbReference type="NCBI Taxonomy" id="264201"/>
    <lineage>
        <taxon>Bacteria</taxon>
        <taxon>Pseudomonadati</taxon>
        <taxon>Chlamydiota</taxon>
        <taxon>Chlamydiia</taxon>
        <taxon>Parachlamydiales</taxon>
        <taxon>Parachlamydiaceae</taxon>
        <taxon>Candidatus Protochlamydia</taxon>
    </lineage>
</organism>
<accession>Q6MDM0</accession>
<feature type="chain" id="PRO_0000225559" description="DNA-directed RNA polymerase subunit beta'">
    <location>
        <begin position="1"/>
        <end position="1388"/>
    </location>
</feature>
<feature type="binding site" evidence="1">
    <location>
        <position position="65"/>
    </location>
    <ligand>
        <name>Zn(2+)</name>
        <dbReference type="ChEBI" id="CHEBI:29105"/>
        <label>1</label>
    </ligand>
</feature>
<feature type="binding site" evidence="1">
    <location>
        <position position="67"/>
    </location>
    <ligand>
        <name>Zn(2+)</name>
        <dbReference type="ChEBI" id="CHEBI:29105"/>
        <label>1</label>
    </ligand>
</feature>
<feature type="binding site" evidence="1">
    <location>
        <position position="80"/>
    </location>
    <ligand>
        <name>Zn(2+)</name>
        <dbReference type="ChEBI" id="CHEBI:29105"/>
        <label>1</label>
    </ligand>
</feature>
<feature type="binding site" evidence="1">
    <location>
        <position position="83"/>
    </location>
    <ligand>
        <name>Zn(2+)</name>
        <dbReference type="ChEBI" id="CHEBI:29105"/>
        <label>1</label>
    </ligand>
</feature>
<feature type="binding site" evidence="1">
    <location>
        <position position="456"/>
    </location>
    <ligand>
        <name>Mg(2+)</name>
        <dbReference type="ChEBI" id="CHEBI:18420"/>
    </ligand>
</feature>
<feature type="binding site" evidence="1">
    <location>
        <position position="458"/>
    </location>
    <ligand>
        <name>Mg(2+)</name>
        <dbReference type="ChEBI" id="CHEBI:18420"/>
    </ligand>
</feature>
<feature type="binding site" evidence="1">
    <location>
        <position position="460"/>
    </location>
    <ligand>
        <name>Mg(2+)</name>
        <dbReference type="ChEBI" id="CHEBI:18420"/>
    </ligand>
</feature>
<feature type="binding site" evidence="1">
    <location>
        <position position="812"/>
    </location>
    <ligand>
        <name>Zn(2+)</name>
        <dbReference type="ChEBI" id="CHEBI:29105"/>
        <label>2</label>
    </ligand>
</feature>
<feature type="binding site" evidence="1">
    <location>
        <position position="887"/>
    </location>
    <ligand>
        <name>Zn(2+)</name>
        <dbReference type="ChEBI" id="CHEBI:29105"/>
        <label>2</label>
    </ligand>
</feature>
<feature type="binding site" evidence="1">
    <location>
        <position position="894"/>
    </location>
    <ligand>
        <name>Zn(2+)</name>
        <dbReference type="ChEBI" id="CHEBI:29105"/>
        <label>2</label>
    </ligand>
</feature>
<feature type="binding site" evidence="1">
    <location>
        <position position="897"/>
    </location>
    <ligand>
        <name>Zn(2+)</name>
        <dbReference type="ChEBI" id="CHEBI:29105"/>
        <label>2</label>
    </ligand>
</feature>
<name>RPOC_PARUW</name>
<comment type="function">
    <text evidence="1">DNA-dependent RNA polymerase catalyzes the transcription of DNA into RNA using the four ribonucleoside triphosphates as substrates.</text>
</comment>
<comment type="catalytic activity">
    <reaction evidence="1">
        <text>RNA(n) + a ribonucleoside 5'-triphosphate = RNA(n+1) + diphosphate</text>
        <dbReference type="Rhea" id="RHEA:21248"/>
        <dbReference type="Rhea" id="RHEA-COMP:14527"/>
        <dbReference type="Rhea" id="RHEA-COMP:17342"/>
        <dbReference type="ChEBI" id="CHEBI:33019"/>
        <dbReference type="ChEBI" id="CHEBI:61557"/>
        <dbReference type="ChEBI" id="CHEBI:140395"/>
        <dbReference type="EC" id="2.7.7.6"/>
    </reaction>
</comment>
<comment type="cofactor">
    <cofactor evidence="1">
        <name>Mg(2+)</name>
        <dbReference type="ChEBI" id="CHEBI:18420"/>
    </cofactor>
    <text evidence="1">Binds 1 Mg(2+) ion per subunit.</text>
</comment>
<comment type="cofactor">
    <cofactor evidence="1">
        <name>Zn(2+)</name>
        <dbReference type="ChEBI" id="CHEBI:29105"/>
    </cofactor>
    <text evidence="1">Binds 2 Zn(2+) ions per subunit.</text>
</comment>
<comment type="subunit">
    <text evidence="1">The RNAP catalytic core consists of 2 alpha, 1 beta, 1 beta' and 1 omega subunit. When a sigma factor is associated with the core the holoenzyme is formed, which can initiate transcription.</text>
</comment>
<comment type="similarity">
    <text evidence="1">Belongs to the RNA polymerase beta' chain family.</text>
</comment>
<reference key="1">
    <citation type="journal article" date="2004" name="Science">
        <title>Illuminating the evolutionary history of chlamydiae.</title>
        <authorList>
            <person name="Horn M."/>
            <person name="Collingro A."/>
            <person name="Schmitz-Esser S."/>
            <person name="Beier C.L."/>
            <person name="Purkhold U."/>
            <person name="Fartmann B."/>
            <person name="Brandt P."/>
            <person name="Nyakatura G.J."/>
            <person name="Droege M."/>
            <person name="Frishman D."/>
            <person name="Rattei T."/>
            <person name="Mewes H.-W."/>
            <person name="Wagner M."/>
        </authorList>
    </citation>
    <scope>NUCLEOTIDE SEQUENCE [LARGE SCALE GENOMIC DNA]</scope>
    <source>
        <strain>UWE25</strain>
    </source>
</reference>
<keyword id="KW-0240">DNA-directed RNA polymerase</keyword>
<keyword id="KW-0460">Magnesium</keyword>
<keyword id="KW-0479">Metal-binding</keyword>
<keyword id="KW-0548">Nucleotidyltransferase</keyword>
<keyword id="KW-1185">Reference proteome</keyword>
<keyword id="KW-0804">Transcription</keyword>
<keyword id="KW-0808">Transferase</keyword>
<keyword id="KW-0862">Zinc</keyword>
<gene>
    <name evidence="1" type="primary">rpoC</name>
    <name type="ordered locus">pc0605</name>
</gene>
<proteinExistence type="inferred from homology"/>
<evidence type="ECO:0000255" key="1">
    <source>
        <dbReference type="HAMAP-Rule" id="MF_01322"/>
    </source>
</evidence>